<proteinExistence type="inferred from homology"/>
<protein>
    <recommendedName>
        <fullName evidence="3">N-(2-amino-2-carboxyethyl)-L-glutamate synthase</fullName>
        <shortName evidence="3">ACEGA synthase</shortName>
        <ecNumber evidence="1">2.5.1.140</ecNumber>
    </recommendedName>
</protein>
<dbReference type="EC" id="2.5.1.140" evidence="1"/>
<dbReference type="EMBL" id="AP009324">
    <property type="protein sequence ID" value="BAF76998.1"/>
    <property type="molecule type" value="Genomic_DNA"/>
</dbReference>
<dbReference type="RefSeq" id="WP_000570808.1">
    <property type="nucleotide sequence ID" value="NZ_CTYB01000032.1"/>
</dbReference>
<dbReference type="SMR" id="A7WX68"/>
<dbReference type="KEGG" id="saw:SAHV_0115"/>
<dbReference type="HOGENOM" id="CLU_021018_1_0_9"/>
<dbReference type="GO" id="GO:0016765">
    <property type="term" value="F:transferase activity, transferring alkyl or aryl (other than methyl) groups"/>
    <property type="evidence" value="ECO:0007669"/>
    <property type="project" value="UniProtKB-ARBA"/>
</dbReference>
<dbReference type="GO" id="GO:0006535">
    <property type="term" value="P:cysteine biosynthetic process from serine"/>
    <property type="evidence" value="ECO:0007669"/>
    <property type="project" value="InterPro"/>
</dbReference>
<dbReference type="CDD" id="cd01561">
    <property type="entry name" value="CBS_like"/>
    <property type="match status" value="1"/>
</dbReference>
<dbReference type="Gene3D" id="3.40.50.1100">
    <property type="match status" value="2"/>
</dbReference>
<dbReference type="InterPro" id="IPR050214">
    <property type="entry name" value="Cys_Synth/Cystath_Beta-Synth"/>
</dbReference>
<dbReference type="InterPro" id="IPR001216">
    <property type="entry name" value="P-phosphate_BS"/>
</dbReference>
<dbReference type="InterPro" id="IPR023927">
    <property type="entry name" value="SbnA"/>
</dbReference>
<dbReference type="InterPro" id="IPR001926">
    <property type="entry name" value="TrpB-like_PALP"/>
</dbReference>
<dbReference type="InterPro" id="IPR036052">
    <property type="entry name" value="TrpB-like_PALP_sf"/>
</dbReference>
<dbReference type="NCBIfam" id="TIGR03945">
    <property type="entry name" value="PLP_SbnA_fam"/>
    <property type="match status" value="1"/>
</dbReference>
<dbReference type="PANTHER" id="PTHR10314">
    <property type="entry name" value="CYSTATHIONINE BETA-SYNTHASE"/>
    <property type="match status" value="1"/>
</dbReference>
<dbReference type="Pfam" id="PF00291">
    <property type="entry name" value="PALP"/>
    <property type="match status" value="1"/>
</dbReference>
<dbReference type="SUPFAM" id="SSF53686">
    <property type="entry name" value="Tryptophan synthase beta subunit-like PLP-dependent enzymes"/>
    <property type="match status" value="1"/>
</dbReference>
<dbReference type="PROSITE" id="PS00901">
    <property type="entry name" value="CYS_SYNTHASE"/>
    <property type="match status" value="1"/>
</dbReference>
<accession>A7WX68</accession>
<gene>
    <name type="primary">sbnA</name>
    <name type="ordered locus">SAHV_0115</name>
</gene>
<organism>
    <name type="scientific">Staphylococcus aureus (strain Mu3 / ATCC 700698)</name>
    <dbReference type="NCBI Taxonomy" id="418127"/>
    <lineage>
        <taxon>Bacteria</taxon>
        <taxon>Bacillati</taxon>
        <taxon>Bacillota</taxon>
        <taxon>Bacilli</taxon>
        <taxon>Bacillales</taxon>
        <taxon>Staphylococcaceae</taxon>
        <taxon>Staphylococcus</taxon>
    </lineage>
</organism>
<keyword id="KW-0663">Pyridoxal phosphate</keyword>
<keyword id="KW-0808">Transferase</keyword>
<feature type="chain" id="PRO_0000395019" description="N-(2-amino-2-carboxyethyl)-L-glutamate synthase">
    <location>
        <begin position="1"/>
        <end position="326"/>
    </location>
</feature>
<feature type="binding site" evidence="1">
    <location>
        <position position="77"/>
    </location>
    <ligand>
        <name>pyridoxal 5'-phosphate</name>
        <dbReference type="ChEBI" id="CHEBI:597326"/>
    </ligand>
</feature>
<feature type="binding site" evidence="1">
    <location>
        <begin position="185"/>
        <end position="189"/>
    </location>
    <ligand>
        <name>pyridoxal 5'-phosphate</name>
        <dbReference type="ChEBI" id="CHEBI:597326"/>
    </ligand>
</feature>
<feature type="binding site" evidence="1">
    <location>
        <position position="272"/>
    </location>
    <ligand>
        <name>pyridoxal 5'-phosphate</name>
        <dbReference type="ChEBI" id="CHEBI:597326"/>
    </ligand>
</feature>
<feature type="modified residue" description="N6-(pyridoxal phosphate)lysine" evidence="1">
    <location>
        <position position="47"/>
    </location>
</feature>
<name>SBNA_STAA1</name>
<evidence type="ECO:0000250" key="1">
    <source>
        <dbReference type="UniProtKB" id="A6QDA0"/>
    </source>
</evidence>
<evidence type="ECO:0000250" key="2">
    <source>
        <dbReference type="UniProtKB" id="Q2G1N3"/>
    </source>
</evidence>
<evidence type="ECO:0000305" key="3"/>
<comment type="function">
    <text evidence="1">Catalyzes the synthesis of N-((2S)-2-amino-2-carboxyethyl)-L-glutamate (ACEGA) from O-phospho-L-serine and L-glutamate. Involved in the biosynthesis of L-2,3-diaminopropionic acid (L-Dap), a precursor of staphyloferrin B and antibiotics.</text>
</comment>
<comment type="catalytic activity">
    <reaction evidence="1">
        <text>O-phospho-L-serine + L-glutamate = N-[(2S)-2-amino-2-carboxyethyl]-L-glutamate + phosphate + H(+)</text>
        <dbReference type="Rhea" id="RHEA:52384"/>
        <dbReference type="ChEBI" id="CHEBI:15378"/>
        <dbReference type="ChEBI" id="CHEBI:29985"/>
        <dbReference type="ChEBI" id="CHEBI:43474"/>
        <dbReference type="ChEBI" id="CHEBI:57524"/>
        <dbReference type="ChEBI" id="CHEBI:134610"/>
        <dbReference type="EC" id="2.5.1.140"/>
    </reaction>
</comment>
<comment type="cofactor">
    <cofactor evidence="1">
        <name>pyridoxal 5'-phosphate</name>
        <dbReference type="ChEBI" id="CHEBI:597326"/>
    </cofactor>
</comment>
<comment type="pathway">
    <text evidence="1">Siderophore biosynthesis.</text>
</comment>
<comment type="subunit">
    <text evidence="1">Homodimer.</text>
</comment>
<comment type="induction">
    <text evidence="2">Up-regulated under iron-deficient growth conditions. Repressed by Fur under iron-rich growth conditions.</text>
</comment>
<comment type="similarity">
    <text evidence="3">Belongs to the cysteine synthase/cystathionine beta-synthase family. SbnA subfamily.</text>
</comment>
<reference key="1">
    <citation type="journal article" date="2008" name="Antimicrob. Agents Chemother.">
        <title>Mutated response regulator graR is responsible for phenotypic conversion of Staphylococcus aureus from heterogeneous vancomycin-intermediate resistance to vancomycin-intermediate resistance.</title>
        <authorList>
            <person name="Neoh H.-M."/>
            <person name="Cui L."/>
            <person name="Yuzawa H."/>
            <person name="Takeuchi F."/>
            <person name="Matsuo M."/>
            <person name="Hiramatsu K."/>
        </authorList>
    </citation>
    <scope>NUCLEOTIDE SEQUENCE [LARGE SCALE GENOMIC DNA]</scope>
    <source>
        <strain>Mu3 / ATCC 700698</strain>
    </source>
</reference>
<sequence>MIEKSQACHDSLLDSVGQTPMVQLHQLFPKHEVFAKLEYMNPGGSMKDRPAKYIIEHGIKHGLITENTHLIESTSGNLGIALAMIAKIKGLKLTCVVDPKISPTNLKIIKSYGANVEMVEEPDAHGGYLMTRIAKVQELLATIDDAYWINQYANELNWQSHYHGAGTEIVETIKQPIDYFVAPVSTTGSIMGMSRKIKEVHPNAQIVAVDAKGSVIFGDKPINRELPGIGASRVPEILNRSEINQVIHVDDYQSALGCRKLIDYEGIFAGGSTGSIIAAIEQLITSIEEGATIVTILPDRGDRYLDLVYSDTWLEKMKSRQGVKSE</sequence>